<evidence type="ECO:0000255" key="1">
    <source>
        <dbReference type="HAMAP-Rule" id="MF_01020"/>
    </source>
</evidence>
<accession>A8LSV9</accession>
<keyword id="KW-0028">Amino-acid biosynthesis</keyword>
<keyword id="KW-0067">ATP-binding</keyword>
<keyword id="KW-0963">Cytoplasm</keyword>
<keyword id="KW-0368">Histidine biosynthesis</keyword>
<keyword id="KW-0378">Hydrolase</keyword>
<keyword id="KW-0547">Nucleotide-binding</keyword>
<keyword id="KW-1185">Reference proteome</keyword>
<dbReference type="EC" id="3.6.1.31" evidence="1"/>
<dbReference type="EMBL" id="CP000830">
    <property type="protein sequence ID" value="ABV94308.1"/>
    <property type="molecule type" value="Genomic_DNA"/>
</dbReference>
<dbReference type="RefSeq" id="WP_012179236.1">
    <property type="nucleotide sequence ID" value="NC_009952.1"/>
</dbReference>
<dbReference type="SMR" id="A8LSV9"/>
<dbReference type="STRING" id="398580.Dshi_2575"/>
<dbReference type="KEGG" id="dsh:Dshi_2575"/>
<dbReference type="eggNOG" id="COG0140">
    <property type="taxonomic scope" value="Bacteria"/>
</dbReference>
<dbReference type="HOGENOM" id="CLU_123337_1_1_5"/>
<dbReference type="OrthoDB" id="9814738at2"/>
<dbReference type="UniPathway" id="UPA00031">
    <property type="reaction ID" value="UER00007"/>
</dbReference>
<dbReference type="Proteomes" id="UP000006833">
    <property type="component" value="Chromosome"/>
</dbReference>
<dbReference type="GO" id="GO:0005737">
    <property type="term" value="C:cytoplasm"/>
    <property type="evidence" value="ECO:0007669"/>
    <property type="project" value="UniProtKB-SubCell"/>
</dbReference>
<dbReference type="GO" id="GO:0005524">
    <property type="term" value="F:ATP binding"/>
    <property type="evidence" value="ECO:0007669"/>
    <property type="project" value="UniProtKB-KW"/>
</dbReference>
<dbReference type="GO" id="GO:0004636">
    <property type="term" value="F:phosphoribosyl-ATP diphosphatase activity"/>
    <property type="evidence" value="ECO:0007669"/>
    <property type="project" value="UniProtKB-UniRule"/>
</dbReference>
<dbReference type="GO" id="GO:0000105">
    <property type="term" value="P:L-histidine biosynthetic process"/>
    <property type="evidence" value="ECO:0007669"/>
    <property type="project" value="UniProtKB-UniRule"/>
</dbReference>
<dbReference type="CDD" id="cd11534">
    <property type="entry name" value="NTP-PPase_HisIE_like"/>
    <property type="match status" value="1"/>
</dbReference>
<dbReference type="FunFam" id="1.10.287.1080:FF:000002">
    <property type="entry name" value="Histidine biosynthesis bifunctional protein HisIE"/>
    <property type="match status" value="1"/>
</dbReference>
<dbReference type="Gene3D" id="1.10.287.1080">
    <property type="entry name" value="MazG-like"/>
    <property type="match status" value="1"/>
</dbReference>
<dbReference type="HAMAP" id="MF_01020">
    <property type="entry name" value="HisE"/>
    <property type="match status" value="1"/>
</dbReference>
<dbReference type="InterPro" id="IPR008179">
    <property type="entry name" value="HisE"/>
</dbReference>
<dbReference type="InterPro" id="IPR021130">
    <property type="entry name" value="PRib-ATP_PPHydrolase-like"/>
</dbReference>
<dbReference type="NCBIfam" id="TIGR03188">
    <property type="entry name" value="histidine_hisI"/>
    <property type="match status" value="1"/>
</dbReference>
<dbReference type="NCBIfam" id="NF001611">
    <property type="entry name" value="PRK00400.1-3"/>
    <property type="match status" value="1"/>
</dbReference>
<dbReference type="NCBIfam" id="NF001613">
    <property type="entry name" value="PRK00400.1-5"/>
    <property type="match status" value="1"/>
</dbReference>
<dbReference type="PANTHER" id="PTHR42945">
    <property type="entry name" value="HISTIDINE BIOSYNTHESIS BIFUNCTIONAL PROTEIN"/>
    <property type="match status" value="1"/>
</dbReference>
<dbReference type="PANTHER" id="PTHR42945:SF9">
    <property type="entry name" value="HISTIDINE BIOSYNTHESIS BIFUNCTIONAL PROTEIN HISIE"/>
    <property type="match status" value="1"/>
</dbReference>
<dbReference type="Pfam" id="PF01503">
    <property type="entry name" value="PRA-PH"/>
    <property type="match status" value="1"/>
</dbReference>
<dbReference type="SUPFAM" id="SSF101386">
    <property type="entry name" value="all-alpha NTP pyrophosphatases"/>
    <property type="match status" value="1"/>
</dbReference>
<name>HIS2_DINSH</name>
<organism>
    <name type="scientific">Dinoroseobacter shibae (strain DSM 16493 / NCIMB 14021 / DFL 12)</name>
    <dbReference type="NCBI Taxonomy" id="398580"/>
    <lineage>
        <taxon>Bacteria</taxon>
        <taxon>Pseudomonadati</taxon>
        <taxon>Pseudomonadota</taxon>
        <taxon>Alphaproteobacteria</taxon>
        <taxon>Rhodobacterales</taxon>
        <taxon>Roseobacteraceae</taxon>
        <taxon>Dinoroseobacter</taxon>
    </lineage>
</organism>
<reference key="1">
    <citation type="journal article" date="2010" name="ISME J.">
        <title>The complete genome sequence of the algal symbiont Dinoroseobacter shibae: a hitchhiker's guide to life in the sea.</title>
        <authorList>
            <person name="Wagner-Dobler I."/>
            <person name="Ballhausen B."/>
            <person name="Berger M."/>
            <person name="Brinkhoff T."/>
            <person name="Buchholz I."/>
            <person name="Bunk B."/>
            <person name="Cypionka H."/>
            <person name="Daniel R."/>
            <person name="Drepper T."/>
            <person name="Gerdts G."/>
            <person name="Hahnke S."/>
            <person name="Han C."/>
            <person name="Jahn D."/>
            <person name="Kalhoefer D."/>
            <person name="Kiss H."/>
            <person name="Klenk H.P."/>
            <person name="Kyrpides N."/>
            <person name="Liebl W."/>
            <person name="Liesegang H."/>
            <person name="Meincke L."/>
            <person name="Pati A."/>
            <person name="Petersen J."/>
            <person name="Piekarski T."/>
            <person name="Pommerenke C."/>
            <person name="Pradella S."/>
            <person name="Pukall R."/>
            <person name="Rabus R."/>
            <person name="Stackebrandt E."/>
            <person name="Thole S."/>
            <person name="Thompson L."/>
            <person name="Tielen P."/>
            <person name="Tomasch J."/>
            <person name="von Jan M."/>
            <person name="Wanphrut N."/>
            <person name="Wichels A."/>
            <person name="Zech H."/>
            <person name="Simon M."/>
        </authorList>
    </citation>
    <scope>NUCLEOTIDE SEQUENCE [LARGE SCALE GENOMIC DNA]</scope>
    <source>
        <strain>DSM 16493 / NCIMB 14021 / DFL 12</strain>
    </source>
</reference>
<gene>
    <name evidence="1" type="primary">hisE</name>
    <name type="ordered locus">Dshi_2575</name>
</gene>
<comment type="catalytic activity">
    <reaction evidence="1">
        <text>1-(5-phospho-beta-D-ribosyl)-ATP + H2O = 1-(5-phospho-beta-D-ribosyl)-5'-AMP + diphosphate + H(+)</text>
        <dbReference type="Rhea" id="RHEA:22828"/>
        <dbReference type="ChEBI" id="CHEBI:15377"/>
        <dbReference type="ChEBI" id="CHEBI:15378"/>
        <dbReference type="ChEBI" id="CHEBI:33019"/>
        <dbReference type="ChEBI" id="CHEBI:59457"/>
        <dbReference type="ChEBI" id="CHEBI:73183"/>
        <dbReference type="EC" id="3.6.1.31"/>
    </reaction>
</comment>
<comment type="pathway">
    <text evidence="1">Amino-acid biosynthesis; L-histidine biosynthesis; L-histidine from 5-phospho-alpha-D-ribose 1-diphosphate: step 2/9.</text>
</comment>
<comment type="subcellular location">
    <subcellularLocation>
        <location evidence="1">Cytoplasm</location>
    </subcellularLocation>
</comment>
<comment type="similarity">
    <text evidence="1">Belongs to the PRA-PH family.</text>
</comment>
<feature type="chain" id="PRO_1000084169" description="Phosphoribosyl-ATP pyrophosphatase">
    <location>
        <begin position="1"/>
        <end position="102"/>
    </location>
</feature>
<sequence length="102" mass="10879">MSVLARLEATIAARKGADPDSSWTAKLLAKGPEKCAEKFGEEAVEAIIEAVKGDRAKLTSEAADVLYHLLVMLAARDVALAEVLAELERREGISGISEKASR</sequence>
<protein>
    <recommendedName>
        <fullName evidence="1">Phosphoribosyl-ATP pyrophosphatase</fullName>
        <shortName evidence="1">PRA-PH</shortName>
        <ecNumber evidence="1">3.6.1.31</ecNumber>
    </recommendedName>
</protein>
<proteinExistence type="inferred from homology"/>